<comment type="function">
    <text evidence="3 5 6 8 9 10 15 16">Promotes cell fate progression in stomatal development. In leaves, needed to correctly orient spacing divisions, to limit the number of asymmetric divisions in neighbor cells, and to promote the asymmetric (amplifying) divisions of meristemoids. In stems, promotes the conversion of meristemoids into guard mother cells (GMC) (PubMed:11090210, PubMed:12040198, PubMed:18979118). Positively regulates CAPRICE (CPC) expression in differentiating stomaless-forming cell files (PubMed:19513241). Forms constitutive complexes with ERECTA and ERL1 involved in the recognition of the stomatal regulatory peptides EPF1, EPF2 and EPFL9/STOMAGEN (PubMed:28536146). Modulates the activity of the ligand-receptor pairs EPF2-ERECTA and EPF1-ERL1 in stomatal development (PubMed:16002616, PubMed:22241782). Functions in a combinatorial specific manner with the ERECTA-family (ERf) receptor kinases in the regulation of the immune response (PubMed:27446127).</text>
</comment>
<comment type="subunit">
    <text evidence="10 12 14 16">Forms heterodimer with ERECTA or ERL1 through their extracellular domains (PubMed:22241782, PubMed:28536146). Not able to form homodimer (PubMed:22241782). Interacts with EPF2 but not with EPF1 (PubMed:22241782). Interacts with SERK1, SERK2, SERK3/BAK1 and SERK4 (PubMed:26320950). Interacts with EPFL9/STOMAGEN (PubMed:26083750).</text>
</comment>
<comment type="subcellular location">
    <subcellularLocation>
        <location evidence="10 19">Cell membrane</location>
        <topology evidence="21">Single-pass type I membrane protein</topology>
    </subcellularLocation>
</comment>
<comment type="tissue specificity">
    <text evidence="6 8 13">In epidermal cells of developing shoots and leaves, but not in roots. Expressed in the stomatal cell lineage in the developing epidermis. Accumulates strongly in meristemoid mother cells (MMC) and meristemoids, somewhat less in meristemoid sister cells (stomatal-lineage ground cells, SLGC), and is barely detected in pavement cells (PubMed:26203655).</text>
</comment>
<comment type="developmental stage">
    <text evidence="8 9">Expressed in the stomatal precursor cells and in immature stomata (PubMed:19513241). Decreases as leaves matured and no expression in fully expanded leaves (PubMed:18979118).</text>
</comment>
<comment type="induction">
    <text evidence="13">Up-regulated by SPCH-SCRM module.</text>
</comment>
<comment type="disruption phenotype">
    <text evidence="4 7 8 11 15 17">Lack of stomata in stem, hypocotyl and on the adaxial side of the sepal. By contrast, cotyledons, anthers and abaxial side of the sepal have excess stomata, with many in direct contact and producing clusters. Altered responses to abscisic acid (ABA) (PubMed:18434605, PubMed:24553751). Enhanced susceptibility to the necrotrophic fungus Plectosphaerella cucumerina BMM (PcBMM) (PubMed:27446127).</text>
</comment>
<comment type="miscellaneous">
    <text evidence="11 19">TMM lacks an intracellular kinase domain and may participate in active signal transduction only through physical interaction with other proteins (PubMed:12040198). Overexpression of TMM leads to altered formation of trichomes (PubMed:24553751).</text>
</comment>
<comment type="similarity">
    <text evidence="21">Belongs to the RLP family.</text>
</comment>
<evidence type="ECO:0000255" key="1"/>
<evidence type="ECO:0000256" key="2">
    <source>
        <dbReference type="SAM" id="MobiDB-lite"/>
    </source>
</evidence>
<evidence type="ECO:0000269" key="3">
    <source>
    </source>
</evidence>
<evidence type="ECO:0000269" key="4">
    <source>
    </source>
</evidence>
<evidence type="ECO:0000269" key="5">
    <source>
    </source>
</evidence>
<evidence type="ECO:0000269" key="6">
    <source>
    </source>
</evidence>
<evidence type="ECO:0000269" key="7">
    <source>
    </source>
</evidence>
<evidence type="ECO:0000269" key="8">
    <source>
    </source>
</evidence>
<evidence type="ECO:0000269" key="9">
    <source>
    </source>
</evidence>
<evidence type="ECO:0000269" key="10">
    <source>
    </source>
</evidence>
<evidence type="ECO:0000269" key="11">
    <source>
    </source>
</evidence>
<evidence type="ECO:0000269" key="12">
    <source>
    </source>
</evidence>
<evidence type="ECO:0000269" key="13">
    <source>
    </source>
</evidence>
<evidence type="ECO:0000269" key="14">
    <source>
    </source>
</evidence>
<evidence type="ECO:0000269" key="15">
    <source>
    </source>
</evidence>
<evidence type="ECO:0000269" key="16">
    <source>
    </source>
</evidence>
<evidence type="ECO:0000269" key="17">
    <source>
    </source>
</evidence>
<evidence type="ECO:0000303" key="18">
    <source>
    </source>
</evidence>
<evidence type="ECO:0000303" key="19">
    <source>
    </source>
</evidence>
<evidence type="ECO:0000303" key="20">
    <source>
    </source>
</evidence>
<evidence type="ECO:0000305" key="21"/>
<evidence type="ECO:0000312" key="22">
    <source>
        <dbReference type="Araport" id="AT1G80080"/>
    </source>
</evidence>
<evidence type="ECO:0000312" key="23">
    <source>
        <dbReference type="EMBL" id="AAD55468.1"/>
    </source>
</evidence>
<evidence type="ECO:0007829" key="24">
    <source>
        <dbReference type="PDB" id="5XJO"/>
    </source>
</evidence>
<evidence type="ECO:0007829" key="25">
    <source>
        <dbReference type="PDB" id="5XJX"/>
    </source>
</evidence>
<accession>Q9SSD1</accession>
<accession>Q8GWY1</accession>
<proteinExistence type="evidence at protein level"/>
<name>TMM_ARATH</name>
<feature type="signal peptide" evidence="1">
    <location>
        <begin position="1"/>
        <end position="23"/>
    </location>
</feature>
<feature type="chain" id="PRO_0000022557" description="Protein TOO MANY MOUTHS">
    <location>
        <begin position="24"/>
        <end position="496"/>
    </location>
</feature>
<feature type="topological domain" description="Extracellular" evidence="1">
    <location>
        <begin position="24"/>
        <end position="473"/>
    </location>
</feature>
<feature type="transmembrane region" description="Helical" evidence="1">
    <location>
        <begin position="474"/>
        <end position="494"/>
    </location>
</feature>
<feature type="topological domain" description="Cytoplasmic" evidence="1">
    <location>
        <begin position="495"/>
        <end position="496"/>
    </location>
</feature>
<feature type="repeat" description="LRR 1" evidence="1">
    <location>
        <begin position="158"/>
        <end position="182"/>
    </location>
</feature>
<feature type="repeat" description="LRR 2" evidence="1">
    <location>
        <begin position="183"/>
        <end position="208"/>
    </location>
</feature>
<feature type="repeat" description="LRR 3" evidence="1">
    <location>
        <begin position="210"/>
        <end position="228"/>
    </location>
</feature>
<feature type="repeat" description="LRR 4" evidence="1">
    <location>
        <begin position="229"/>
        <end position="252"/>
    </location>
</feature>
<feature type="repeat" description="LRR 5" evidence="1">
    <location>
        <begin position="254"/>
        <end position="276"/>
    </location>
</feature>
<feature type="repeat" description="LRR 6" evidence="1">
    <location>
        <begin position="277"/>
        <end position="300"/>
    </location>
</feature>
<feature type="repeat" description="LRR 7" evidence="1">
    <location>
        <begin position="302"/>
        <end position="325"/>
    </location>
</feature>
<feature type="repeat" description="LRR 8" evidence="1">
    <location>
        <begin position="326"/>
        <end position="350"/>
    </location>
</feature>
<feature type="repeat" description="LRR 9" evidence="1">
    <location>
        <begin position="351"/>
        <end position="373"/>
    </location>
</feature>
<feature type="repeat" description="LRR 10" evidence="1">
    <location>
        <begin position="375"/>
        <end position="401"/>
    </location>
</feature>
<feature type="region of interest" description="Disordered" evidence="2">
    <location>
        <begin position="438"/>
        <end position="464"/>
    </location>
</feature>
<feature type="glycosylation site" description="N-linked (GlcNAc...) asparagine" evidence="1">
    <location>
        <position position="181"/>
    </location>
</feature>
<feature type="glycosylation site" description="N-linked (GlcNAc...) asparagine" evidence="1">
    <location>
        <position position="196"/>
    </location>
</feature>
<feature type="glycosylation site" description="N-linked (GlcNAc...) asparagine" evidence="1">
    <location>
        <position position="362"/>
    </location>
</feature>
<feature type="sequence conflict" description="In Ref. 3; BAC43164 and 4; AAO64827." evidence="21" ref="3 4">
    <original>I</original>
    <variation>F</variation>
    <location>
        <position position="12"/>
    </location>
</feature>
<feature type="sequence conflict" description="In Ref. 3; BAC43164 and 4; AAO64827." evidence="21" ref="3 4">
    <original>L</original>
    <variation>F</variation>
    <location>
        <position position="276"/>
    </location>
</feature>
<feature type="sequence conflict" description="In Ref. 3; BAC43164 and 4; AAO64827." evidence="21" ref="3 4">
    <original>N</original>
    <variation>S</variation>
    <location>
        <position position="385"/>
    </location>
</feature>
<feature type="helix" evidence="24">
    <location>
        <begin position="56"/>
        <end position="68"/>
    </location>
</feature>
<feature type="helix" evidence="24">
    <location>
        <begin position="72"/>
        <end position="74"/>
    </location>
</feature>
<feature type="turn" evidence="24">
    <location>
        <begin position="80"/>
        <end position="82"/>
    </location>
</feature>
<feature type="strand" evidence="24">
    <location>
        <begin position="88"/>
        <end position="92"/>
    </location>
</feature>
<feature type="strand" evidence="24">
    <location>
        <begin position="96"/>
        <end position="106"/>
    </location>
</feature>
<feature type="strand" evidence="24">
    <location>
        <begin position="108"/>
        <end position="110"/>
    </location>
</feature>
<feature type="turn" evidence="24">
    <location>
        <begin position="119"/>
        <end position="121"/>
    </location>
</feature>
<feature type="helix" evidence="24">
    <location>
        <begin position="126"/>
        <end position="130"/>
    </location>
</feature>
<feature type="strand" evidence="24">
    <location>
        <begin position="136"/>
        <end position="141"/>
    </location>
</feature>
<feature type="helix" evidence="24">
    <location>
        <begin position="152"/>
        <end position="157"/>
    </location>
</feature>
<feature type="turn" evidence="24">
    <location>
        <begin position="158"/>
        <end position="160"/>
    </location>
</feature>
<feature type="strand" evidence="24">
    <location>
        <begin position="163"/>
        <end position="169"/>
    </location>
</feature>
<feature type="strand" evidence="24">
    <location>
        <begin position="172"/>
        <end position="174"/>
    </location>
</feature>
<feature type="helix" evidence="24">
    <location>
        <begin position="177"/>
        <end position="181"/>
    </location>
</feature>
<feature type="strand" evidence="24">
    <location>
        <begin position="186"/>
        <end position="189"/>
    </location>
</feature>
<feature type="strand" evidence="24">
    <location>
        <begin position="192"/>
        <end position="198"/>
    </location>
</feature>
<feature type="helix" evidence="24">
    <location>
        <begin position="201"/>
        <end position="205"/>
    </location>
</feature>
<feature type="strand" evidence="24">
    <location>
        <begin position="211"/>
        <end position="213"/>
    </location>
</feature>
<feature type="strand" evidence="24">
    <location>
        <begin position="220"/>
        <end position="222"/>
    </location>
</feature>
<feature type="strand" evidence="24">
    <location>
        <begin position="233"/>
        <end position="235"/>
    </location>
</feature>
<feature type="strand" evidence="25">
    <location>
        <begin position="242"/>
        <end position="244"/>
    </location>
</feature>
<feature type="helix" evidence="24">
    <location>
        <begin position="247"/>
        <end position="251"/>
    </location>
</feature>
<feature type="strand" evidence="24">
    <location>
        <begin position="257"/>
        <end position="259"/>
    </location>
</feature>
<feature type="helix" evidence="24">
    <location>
        <begin position="271"/>
        <end position="275"/>
    </location>
</feature>
<feature type="strand" evidence="24">
    <location>
        <begin position="281"/>
        <end position="283"/>
    </location>
</feature>
<feature type="strand" evidence="24">
    <location>
        <begin position="286"/>
        <end position="289"/>
    </location>
</feature>
<feature type="strand" evidence="24">
    <location>
        <begin position="305"/>
        <end position="307"/>
    </location>
</feature>
<feature type="turn" evidence="24">
    <location>
        <begin position="320"/>
        <end position="323"/>
    </location>
</feature>
<feature type="strand" evidence="24">
    <location>
        <begin position="331"/>
        <end position="333"/>
    </location>
</feature>
<feature type="strand" evidence="24">
    <location>
        <begin position="339"/>
        <end position="342"/>
    </location>
</feature>
<feature type="helix" evidence="24">
    <location>
        <begin position="346"/>
        <end position="349"/>
    </location>
</feature>
<feature type="strand" evidence="24">
    <location>
        <begin position="355"/>
        <end position="357"/>
    </location>
</feature>
<feature type="strand" evidence="24">
    <location>
        <begin position="360"/>
        <end position="365"/>
    </location>
</feature>
<feature type="helix" evidence="24">
    <location>
        <begin position="369"/>
        <end position="372"/>
    </location>
</feature>
<feature type="strand" evidence="24">
    <location>
        <begin position="378"/>
        <end position="381"/>
    </location>
</feature>
<feature type="strand" evidence="25">
    <location>
        <begin position="384"/>
        <end position="387"/>
    </location>
</feature>
<feature type="helix" evidence="24">
    <location>
        <begin position="395"/>
        <end position="401"/>
    </location>
</feature>
<feature type="helix" evidence="24">
    <location>
        <begin position="402"/>
        <end position="404"/>
    </location>
</feature>
<reference key="1">
    <citation type="journal article" date="2000" name="Nature">
        <title>Sequence and analysis of chromosome 1 of the plant Arabidopsis thaliana.</title>
        <authorList>
            <person name="Theologis A."/>
            <person name="Ecker J.R."/>
            <person name="Palm C.J."/>
            <person name="Federspiel N.A."/>
            <person name="Kaul S."/>
            <person name="White O."/>
            <person name="Alonso J."/>
            <person name="Altafi H."/>
            <person name="Araujo R."/>
            <person name="Bowman C.L."/>
            <person name="Brooks S.Y."/>
            <person name="Buehler E."/>
            <person name="Chan A."/>
            <person name="Chao Q."/>
            <person name="Chen H."/>
            <person name="Cheuk R.F."/>
            <person name="Chin C.W."/>
            <person name="Chung M.K."/>
            <person name="Conn L."/>
            <person name="Conway A.B."/>
            <person name="Conway A.R."/>
            <person name="Creasy T.H."/>
            <person name="Dewar K."/>
            <person name="Dunn P."/>
            <person name="Etgu P."/>
            <person name="Feldblyum T.V."/>
            <person name="Feng J.-D."/>
            <person name="Fong B."/>
            <person name="Fujii C.Y."/>
            <person name="Gill J.E."/>
            <person name="Goldsmith A.D."/>
            <person name="Haas B."/>
            <person name="Hansen N.F."/>
            <person name="Hughes B."/>
            <person name="Huizar L."/>
            <person name="Hunter J.L."/>
            <person name="Jenkins J."/>
            <person name="Johnson-Hopson C."/>
            <person name="Khan S."/>
            <person name="Khaykin E."/>
            <person name="Kim C.J."/>
            <person name="Koo H.L."/>
            <person name="Kremenetskaia I."/>
            <person name="Kurtz D.B."/>
            <person name="Kwan A."/>
            <person name="Lam B."/>
            <person name="Langin-Hooper S."/>
            <person name="Lee A."/>
            <person name="Lee J.M."/>
            <person name="Lenz C.A."/>
            <person name="Li J.H."/>
            <person name="Li Y.-P."/>
            <person name="Lin X."/>
            <person name="Liu S.X."/>
            <person name="Liu Z.A."/>
            <person name="Luros J.S."/>
            <person name="Maiti R."/>
            <person name="Marziali A."/>
            <person name="Militscher J."/>
            <person name="Miranda M."/>
            <person name="Nguyen M."/>
            <person name="Nierman W.C."/>
            <person name="Osborne B.I."/>
            <person name="Pai G."/>
            <person name="Peterson J."/>
            <person name="Pham P.K."/>
            <person name="Rizzo M."/>
            <person name="Rooney T."/>
            <person name="Rowley D."/>
            <person name="Sakano H."/>
            <person name="Salzberg S.L."/>
            <person name="Schwartz J.R."/>
            <person name="Shinn P."/>
            <person name="Southwick A.M."/>
            <person name="Sun H."/>
            <person name="Tallon L.J."/>
            <person name="Tambunga G."/>
            <person name="Toriumi M.J."/>
            <person name="Town C.D."/>
            <person name="Utterback T."/>
            <person name="Van Aken S."/>
            <person name="Vaysberg M."/>
            <person name="Vysotskaia V.S."/>
            <person name="Walker M."/>
            <person name="Wu D."/>
            <person name="Yu G."/>
            <person name="Fraser C.M."/>
            <person name="Venter J.C."/>
            <person name="Davis R.W."/>
        </authorList>
    </citation>
    <scope>NUCLEOTIDE SEQUENCE [LARGE SCALE GENOMIC DNA]</scope>
    <source>
        <strain>cv. Columbia</strain>
    </source>
</reference>
<reference key="2">
    <citation type="journal article" date="2017" name="Plant J.">
        <title>Araport11: a complete reannotation of the Arabidopsis thaliana reference genome.</title>
        <authorList>
            <person name="Cheng C.Y."/>
            <person name="Krishnakumar V."/>
            <person name="Chan A.P."/>
            <person name="Thibaud-Nissen F."/>
            <person name="Schobel S."/>
            <person name="Town C.D."/>
        </authorList>
    </citation>
    <scope>GENOME REANNOTATION</scope>
    <source>
        <strain>cv. Columbia</strain>
    </source>
</reference>
<reference key="3">
    <citation type="journal article" date="2002" name="Science">
        <title>Functional annotation of a full-length Arabidopsis cDNA collection.</title>
        <authorList>
            <person name="Seki M."/>
            <person name="Narusaka M."/>
            <person name="Kamiya A."/>
            <person name="Ishida J."/>
            <person name="Satou M."/>
            <person name="Sakurai T."/>
            <person name="Nakajima M."/>
            <person name="Enju A."/>
            <person name="Akiyama K."/>
            <person name="Oono Y."/>
            <person name="Muramatsu M."/>
            <person name="Hayashizaki Y."/>
            <person name="Kawai J."/>
            <person name="Carninci P."/>
            <person name="Itoh M."/>
            <person name="Ishii Y."/>
            <person name="Arakawa T."/>
            <person name="Shibata K."/>
            <person name="Shinagawa A."/>
            <person name="Shinozaki K."/>
        </authorList>
    </citation>
    <scope>NUCLEOTIDE SEQUENCE [LARGE SCALE MRNA]</scope>
    <source>
        <strain>cv. Columbia</strain>
    </source>
</reference>
<reference key="4">
    <citation type="journal article" date="2003" name="Science">
        <title>Empirical analysis of transcriptional activity in the Arabidopsis genome.</title>
        <authorList>
            <person name="Yamada K."/>
            <person name="Lim J."/>
            <person name="Dale J.M."/>
            <person name="Chen H."/>
            <person name="Shinn P."/>
            <person name="Palm C.J."/>
            <person name="Southwick A.M."/>
            <person name="Wu H.C."/>
            <person name="Kim C.J."/>
            <person name="Nguyen M."/>
            <person name="Pham P.K."/>
            <person name="Cheuk R.F."/>
            <person name="Karlin-Newmann G."/>
            <person name="Liu S.X."/>
            <person name="Lam B."/>
            <person name="Sakano H."/>
            <person name="Wu T."/>
            <person name="Yu G."/>
            <person name="Miranda M."/>
            <person name="Quach H.L."/>
            <person name="Tripp M."/>
            <person name="Chang C.H."/>
            <person name="Lee J.M."/>
            <person name="Toriumi M.J."/>
            <person name="Chan M.M."/>
            <person name="Tang C.C."/>
            <person name="Onodera C.S."/>
            <person name="Deng J.M."/>
            <person name="Akiyama K."/>
            <person name="Ansari Y."/>
            <person name="Arakawa T."/>
            <person name="Banh J."/>
            <person name="Banno F."/>
            <person name="Bowser L."/>
            <person name="Brooks S.Y."/>
            <person name="Carninci P."/>
            <person name="Chao Q."/>
            <person name="Choy N."/>
            <person name="Enju A."/>
            <person name="Goldsmith A.D."/>
            <person name="Gurjal M."/>
            <person name="Hansen N.F."/>
            <person name="Hayashizaki Y."/>
            <person name="Johnson-Hopson C."/>
            <person name="Hsuan V.W."/>
            <person name="Iida K."/>
            <person name="Karnes M."/>
            <person name="Khan S."/>
            <person name="Koesema E."/>
            <person name="Ishida J."/>
            <person name="Jiang P.X."/>
            <person name="Jones T."/>
            <person name="Kawai J."/>
            <person name="Kamiya A."/>
            <person name="Meyers C."/>
            <person name="Nakajima M."/>
            <person name="Narusaka M."/>
            <person name="Seki M."/>
            <person name="Sakurai T."/>
            <person name="Satou M."/>
            <person name="Tamse R."/>
            <person name="Vaysberg M."/>
            <person name="Wallender E.K."/>
            <person name="Wong C."/>
            <person name="Yamamura Y."/>
            <person name="Yuan S."/>
            <person name="Shinozaki K."/>
            <person name="Davis R.W."/>
            <person name="Theologis A."/>
            <person name="Ecker J.R."/>
        </authorList>
    </citation>
    <scope>NUCLEOTIDE SEQUENCE [LARGE SCALE MRNA]</scope>
    <source>
        <strain>cv. Columbia</strain>
    </source>
</reference>
<reference key="5">
    <citation type="journal article" date="1995" name="Plant Cell">
        <title>The too many mouths and four lips mutations affect stomatal production in Arabidopsis.</title>
        <authorList>
            <person name="Yang M."/>
            <person name="Sack F.D."/>
        </authorList>
    </citation>
    <scope>DISRUPTION PHENOTYPE</scope>
</reference>
<reference key="6">
    <citation type="journal article" date="1998" name="Planta">
        <title>Divergent regulation of stomatal initiation and patterning in organ and suborgan regions of the Arabidopsis mutants too many mouths and four lips.</title>
        <authorList>
            <person name="Geisler M."/>
            <person name="Yang M."/>
            <person name="Sack F.D."/>
        </authorList>
    </citation>
    <scope>DISRUPTION PHENOTYPE</scope>
</reference>
<reference key="7">
    <citation type="journal article" date="2000" name="Plant Cell">
        <title>Oriented asymmetric divisions that generate the stomatal spacing pattern in arabidopsis are disrupted by the too many mouths mutation.</title>
        <authorList>
            <person name="Geisler M."/>
            <person name="Nadeau J."/>
            <person name="Sack F.D."/>
        </authorList>
    </citation>
    <scope>FUNCTION</scope>
</reference>
<reference key="8">
    <citation type="journal article" date="2002" name="Science">
        <title>Control of stomatal distribution on the Arabidopsis leaf surface.</title>
        <authorList>
            <person name="Nadeau J.A."/>
            <person name="Sack F.D."/>
        </authorList>
    </citation>
    <scope>FUNCTION</scope>
    <scope>SUBCELLULAR LOCATION</scope>
</reference>
<reference key="9">
    <citation type="journal article" date="2005" name="Plant Physiol.">
        <title>Phylogenomic analysis of the receptor-like proteins of rice and Arabidopsis.</title>
        <authorList>
            <person name="Fritz-Laylin L.K."/>
            <person name="Krishnamurthy N."/>
            <person name="Toer M."/>
            <person name="Sjoelander K.V."/>
            <person name="Jones J.D."/>
        </authorList>
    </citation>
    <scope>GENE FAMILY</scope>
</reference>
<reference key="10">
    <citation type="journal article" date="2005" name="Science">
        <title>Stomatal patterning and differentiation by synergistic interactions of receptor kinases.</title>
        <authorList>
            <person name="Shpak E.D."/>
            <person name="McAbee J.M."/>
            <person name="Pillitteri L.J."/>
            <person name="Torii K.U."/>
        </authorList>
    </citation>
    <scope>FUNCTION</scope>
    <scope>TISSUE SPECIFICITY</scope>
</reference>
<reference key="11">
    <citation type="journal article" date="2008" name="Plant Physiol.">
        <title>A genome-wide functional investigation into the roles of receptor-like proteins in Arabidopsis.</title>
        <authorList>
            <person name="Wang G."/>
            <person name="Ellendorff U."/>
            <person name="Kemp B."/>
            <person name="Mansfield J.W."/>
            <person name="Forsyth A."/>
            <person name="Mitchell K."/>
            <person name="Bastas K."/>
            <person name="Liu C.-M."/>
            <person name="Woods-Toer A."/>
            <person name="Zipfel C."/>
            <person name="de Wit P.J.G.M."/>
            <person name="Jones J.D.G."/>
            <person name="Toer M."/>
            <person name="Thomma B.P.H.J."/>
        </authorList>
    </citation>
    <scope>GENE FAMILY</scope>
    <scope>NOMENCLATURE</scope>
    <scope>DISRUPTION PHENOTYPE</scope>
</reference>
<reference key="12">
    <citation type="journal article" date="2008" name="Plant Signal. Behav.">
        <title>CAPRICE positively regulates stomatal formation in the Arabidopsis hypocotyl.</title>
        <authorList>
            <person name="Serna L."/>
        </authorList>
    </citation>
    <scope>FUNCTION</scope>
    <scope>DEVELOPMENTAL STAGE</scope>
</reference>
<reference key="13">
    <citation type="journal article" date="2009" name="Curr. Opin. Plant Biol.">
        <title>Stomatal development: new signals and fate determinants.</title>
        <authorList>
            <person name="Nadeau J.A."/>
        </authorList>
    </citation>
    <scope>REVIEW</scope>
</reference>
<reference key="14">
    <citation type="journal article" date="2009" name="Planta">
        <title>TOO MANY MOUTHS promotes cell fate progression in stomatal development of Arabidopsis stems.</title>
        <authorList>
            <person name="Bhave N.S."/>
            <person name="Veley K.M."/>
            <person name="Nadeau J.A."/>
            <person name="Lucas J.R."/>
            <person name="Bhave S.L."/>
            <person name="Sack F.D."/>
        </authorList>
    </citation>
    <scope>FUNCTION</scope>
    <scope>DISRUPTION PHENOTYPE</scope>
    <scope>TISSUE SPECIFICITY</scope>
    <scope>DEVELOPMENTAL STAGE</scope>
</reference>
<reference key="15">
    <citation type="journal article" date="2010" name="Curr. Top. Dev. Biol.">
        <title>Stomatal patterning and development.</title>
        <authorList>
            <person name="Dong J."/>
            <person name="Bergmann D.C."/>
        </authorList>
    </citation>
    <scope>REVIEW</scope>
</reference>
<reference key="16">
    <citation type="journal article" date="2012" name="Genes Dev.">
        <title>Direct interaction of ligand-receptor pairs specifying stomatal patterning.</title>
        <authorList>
            <person name="Lee J.S."/>
            <person name="Kuroha T."/>
            <person name="Hnilova M."/>
            <person name="Khatayevich D."/>
            <person name="Kanaoka M.M."/>
            <person name="McAbee J.M."/>
            <person name="Sarikaya M."/>
            <person name="Tamerler C."/>
            <person name="Torii K.U."/>
        </authorList>
    </citation>
    <scope>FUNCTION</scope>
    <scope>SUBCELLULAR LOCATION</scope>
    <scope>INTERACTION WITH ERECTA; ERL1 AND EPF2</scope>
    <scope>SUBUNIT</scope>
</reference>
<reference key="17">
    <citation type="journal article" date="2012" name="Trends Plant Sci.">
        <title>Mix-and-match: ligand-receptor pairs in stomatal development and beyond.</title>
        <authorList>
            <person name="Torii K.U."/>
        </authorList>
    </citation>
    <scope>REVIEW</scope>
</reference>
<reference key="18">
    <citation type="journal article" date="2014" name="Curr. Opin. Plant Biol.">
        <title>Receptor like proteins associate with SOBIR1-type of adaptors to form bimolecular receptor kinases.</title>
        <authorList>
            <person name="Gust A.A."/>
            <person name="Felix G."/>
        </authorList>
    </citation>
    <scope>REVIEW</scope>
</reference>
<reference key="19">
    <citation type="journal article" date="2014" name="Plant Cell Rep.">
        <title>New phenotypic characteristics of three tmm alleles in Arabidopsis thaliana.</title>
        <authorList>
            <person name="Yan L."/>
            <person name="Cheng X."/>
            <person name="Jia R."/>
            <person name="Qin Q."/>
            <person name="Guan L."/>
            <person name="Du H."/>
            <person name="Hou S."/>
        </authorList>
    </citation>
    <scope>DISRUPTION PHENOTYPE</scope>
</reference>
<reference key="20">
    <citation type="journal article" date="2015" name="Curr. Biol.">
        <title>Differential function of Arabidopsis SERK family receptor-like kinases in stomatal patterning.</title>
        <authorList>
            <person name="Meng X."/>
            <person name="Chen X."/>
            <person name="Mang H."/>
            <person name="Liu C."/>
            <person name="Yu X."/>
            <person name="Gao X."/>
            <person name="Torii K.U."/>
            <person name="He P."/>
            <person name="Shan L."/>
        </authorList>
    </citation>
    <scope>INTERACTION WITH SERK1; SERK2; SERK3/BAK1 AND SERK4</scope>
</reference>
<reference key="21">
    <citation type="journal article" date="2015" name="Nature">
        <title>Competitive binding of antagonistic peptides fine-tunes stomatal patterning.</title>
        <authorList>
            <person name="Lee J.S."/>
            <person name="Hnilova M."/>
            <person name="Maes M."/>
            <person name="Lin Y.C."/>
            <person name="Putarjunan A."/>
            <person name="Han S.K."/>
            <person name="Avila J."/>
            <person name="Torii K.U."/>
        </authorList>
    </citation>
    <scope>INTERACTION WITH EPFL9</scope>
</reference>
<reference key="22">
    <citation type="journal article" date="2015" name="PLoS Genet.">
        <title>Molecular framework of a regulatory circuit initiating two-dimensional spatial patterning of stomatal lineage.</title>
        <authorList>
            <person name="Horst R.J."/>
            <person name="Fujita H."/>
            <person name="Lee J.S."/>
            <person name="Rychel A.L."/>
            <person name="Garrick J.M."/>
            <person name="Kawaguchi M."/>
            <person name="Peterson K.M."/>
            <person name="Torii K.U."/>
        </authorList>
    </citation>
    <scope>TISSUE SPECIFICITY</scope>
    <scope>INDUCTION</scope>
</reference>
<reference key="23">
    <citation type="journal article" date="2016" name="Front. Plant Sci.">
        <title>ERECTA and BAK1 receptor like kinases interact to regulate immune responses in arabidopsis.</title>
        <authorList>
            <person name="Jorda L."/>
            <person name="Sopena-Torres S."/>
            <person name="Escudero V."/>
            <person name="Nunez-Corcuera B."/>
            <person name="Delgado-Cerezo M."/>
            <person name="Torii K.U."/>
            <person name="Molina A."/>
        </authorList>
    </citation>
    <scope>DISRUPTION PHENOTYPE</scope>
    <scope>FUNCTION</scope>
</reference>
<reference key="24">
    <citation type="journal article" date="2017" name="Genes Dev.">
        <title>A receptor-like protein acts as a specificity switch for the regulation of stomatal development.</title>
        <authorList>
            <person name="Lin G."/>
            <person name="Zhang L."/>
            <person name="Han Z."/>
            <person name="Yang X."/>
            <person name="Liu W."/>
            <person name="Li E."/>
            <person name="Chang J."/>
            <person name="Qi Y."/>
            <person name="Shpak E.D."/>
            <person name="Chai J."/>
        </authorList>
    </citation>
    <scope>FUNCTION</scope>
    <scope>SUBUNIT</scope>
    <scope>INTERACTION WITH ERECTA AND ERL1</scope>
</reference>
<organism>
    <name type="scientific">Arabidopsis thaliana</name>
    <name type="common">Mouse-ear cress</name>
    <dbReference type="NCBI Taxonomy" id="3702"/>
    <lineage>
        <taxon>Eukaryota</taxon>
        <taxon>Viridiplantae</taxon>
        <taxon>Streptophyta</taxon>
        <taxon>Embryophyta</taxon>
        <taxon>Tracheophyta</taxon>
        <taxon>Spermatophyta</taxon>
        <taxon>Magnoliopsida</taxon>
        <taxon>eudicotyledons</taxon>
        <taxon>Gunneridae</taxon>
        <taxon>Pentapetalae</taxon>
        <taxon>rosids</taxon>
        <taxon>malvids</taxon>
        <taxon>Brassicales</taxon>
        <taxon>Brassicaceae</taxon>
        <taxon>Camelineae</taxon>
        <taxon>Arabidopsis</taxon>
    </lineage>
</organism>
<gene>
    <name evidence="18" type="primary">TMM</name>
    <name evidence="20" type="synonym">RLP17</name>
    <name evidence="22" type="ordered locus">At1g80080</name>
    <name evidence="23" type="ORF">F18B13.16</name>
</gene>
<dbReference type="EMBL" id="AC009322">
    <property type="protein sequence ID" value="AAD55468.1"/>
    <property type="molecule type" value="Genomic_DNA"/>
</dbReference>
<dbReference type="EMBL" id="CP002684">
    <property type="protein sequence ID" value="AEE36354.1"/>
    <property type="molecule type" value="Genomic_DNA"/>
</dbReference>
<dbReference type="EMBL" id="AK118563">
    <property type="protein sequence ID" value="BAC43164.1"/>
    <property type="molecule type" value="mRNA"/>
</dbReference>
<dbReference type="EMBL" id="BT005892">
    <property type="protein sequence ID" value="AAO64827.1"/>
    <property type="molecule type" value="mRNA"/>
</dbReference>
<dbReference type="PIR" id="C96832">
    <property type="entry name" value="C96832"/>
</dbReference>
<dbReference type="RefSeq" id="NP_178125.1">
    <property type="nucleotide sequence ID" value="NM_106657.3"/>
</dbReference>
<dbReference type="PDB" id="5XJO">
    <property type="method" value="X-ray"/>
    <property type="resolution" value="2.63 A"/>
    <property type="chains" value="C/D=52-425"/>
</dbReference>
<dbReference type="PDB" id="5XJX">
    <property type="method" value="X-ray"/>
    <property type="resolution" value="3.06 A"/>
    <property type="chains" value="C/D/F/H/J/L=28-460"/>
</dbReference>
<dbReference type="PDB" id="5XKJ">
    <property type="method" value="X-ray"/>
    <property type="resolution" value="3.48 A"/>
    <property type="chains" value="C/D=28-460"/>
</dbReference>
<dbReference type="PDBsum" id="5XJO"/>
<dbReference type="PDBsum" id="5XJX"/>
<dbReference type="PDBsum" id="5XKJ"/>
<dbReference type="SMR" id="Q9SSD1"/>
<dbReference type="BioGRID" id="29566">
    <property type="interactions" value="6"/>
</dbReference>
<dbReference type="FunCoup" id="Q9SSD1">
    <property type="interactions" value="601"/>
</dbReference>
<dbReference type="IntAct" id="Q9SSD1">
    <property type="interactions" value="1"/>
</dbReference>
<dbReference type="STRING" id="3702.Q9SSD1"/>
<dbReference type="GlyCosmos" id="Q9SSD1">
    <property type="glycosylation" value="3 sites, No reported glycans"/>
</dbReference>
<dbReference type="GlyGen" id="Q9SSD1">
    <property type="glycosylation" value="3 sites"/>
</dbReference>
<dbReference type="PaxDb" id="3702-AT1G80080.1"/>
<dbReference type="ProteomicsDB" id="234436"/>
<dbReference type="EnsemblPlants" id="AT1G80080.1">
    <property type="protein sequence ID" value="AT1G80080.1"/>
    <property type="gene ID" value="AT1G80080"/>
</dbReference>
<dbReference type="GeneID" id="844348"/>
<dbReference type="Gramene" id="AT1G80080.1">
    <property type="protein sequence ID" value="AT1G80080.1"/>
    <property type="gene ID" value="AT1G80080"/>
</dbReference>
<dbReference type="KEGG" id="ath:AT1G80080"/>
<dbReference type="Araport" id="AT1G80080"/>
<dbReference type="TAIR" id="AT1G80080">
    <property type="gene designation" value="TMM"/>
</dbReference>
<dbReference type="eggNOG" id="KOG0619">
    <property type="taxonomic scope" value="Eukaryota"/>
</dbReference>
<dbReference type="HOGENOM" id="CLU_000288_18_25_1"/>
<dbReference type="InParanoid" id="Q9SSD1"/>
<dbReference type="OMA" id="HEQEAVY"/>
<dbReference type="PhylomeDB" id="Q9SSD1"/>
<dbReference type="PRO" id="PR:Q9SSD1"/>
<dbReference type="Proteomes" id="UP000006548">
    <property type="component" value="Chromosome 1"/>
</dbReference>
<dbReference type="ExpressionAtlas" id="Q9SSD1">
    <property type="expression patterns" value="baseline and differential"/>
</dbReference>
<dbReference type="GO" id="GO:0016020">
    <property type="term" value="C:membrane"/>
    <property type="evidence" value="ECO:0000314"/>
    <property type="project" value="TAIR"/>
</dbReference>
<dbReference type="GO" id="GO:0005886">
    <property type="term" value="C:plasma membrane"/>
    <property type="evidence" value="ECO:0007669"/>
    <property type="project" value="UniProtKB-SubCell"/>
</dbReference>
<dbReference type="GO" id="GO:0042277">
    <property type="term" value="F:peptide binding"/>
    <property type="evidence" value="ECO:0000353"/>
    <property type="project" value="TAIR"/>
</dbReference>
<dbReference type="GO" id="GO:0033612">
    <property type="term" value="F:receptor serine/threonine kinase binding"/>
    <property type="evidence" value="ECO:0000353"/>
    <property type="project" value="UniProtKB"/>
</dbReference>
<dbReference type="GO" id="GO:0008356">
    <property type="term" value="P:asymmetric cell division"/>
    <property type="evidence" value="ECO:0000315"/>
    <property type="project" value="UniProtKB"/>
</dbReference>
<dbReference type="GO" id="GO:0071215">
    <property type="term" value="P:cellular response to abscisic acid stimulus"/>
    <property type="evidence" value="ECO:0000315"/>
    <property type="project" value="UniProtKB"/>
</dbReference>
<dbReference type="GO" id="GO:0050832">
    <property type="term" value="P:defense response to fungus"/>
    <property type="evidence" value="ECO:0000315"/>
    <property type="project" value="UniProtKB"/>
</dbReference>
<dbReference type="GO" id="GO:0045087">
    <property type="term" value="P:innate immune response"/>
    <property type="evidence" value="ECO:0007669"/>
    <property type="project" value="UniProtKB-KW"/>
</dbReference>
<dbReference type="GO" id="GO:1905034">
    <property type="term" value="P:regulation of antifungal innate immune response"/>
    <property type="evidence" value="ECO:0000315"/>
    <property type="project" value="UniProtKB"/>
</dbReference>
<dbReference type="GO" id="GO:0009737">
    <property type="term" value="P:response to abscisic acid"/>
    <property type="evidence" value="ECO:0000315"/>
    <property type="project" value="TAIR"/>
</dbReference>
<dbReference type="GO" id="GO:0010376">
    <property type="term" value="P:stomatal complex formation"/>
    <property type="evidence" value="ECO:0000315"/>
    <property type="project" value="UniProtKB"/>
</dbReference>
<dbReference type="GO" id="GO:0010375">
    <property type="term" value="P:stomatal complex patterning"/>
    <property type="evidence" value="ECO:0000315"/>
    <property type="project" value="UniProtKB"/>
</dbReference>
<dbReference type="GO" id="GO:0010090">
    <property type="term" value="P:trichome morphogenesis"/>
    <property type="evidence" value="ECO:0000315"/>
    <property type="project" value="UniProtKB"/>
</dbReference>
<dbReference type="FunFam" id="3.80.10.10:FF:000383">
    <property type="entry name" value="Leucine-rich repeat receptor protein kinase EMS1"/>
    <property type="match status" value="1"/>
</dbReference>
<dbReference type="FunFam" id="3.80.10.10:FF:000041">
    <property type="entry name" value="LRR receptor-like serine/threonine-protein kinase ERECTA"/>
    <property type="match status" value="1"/>
</dbReference>
<dbReference type="FunFam" id="3.80.10.10:FF:000269">
    <property type="entry name" value="Piriformospora indica-insensitive protein 2"/>
    <property type="match status" value="1"/>
</dbReference>
<dbReference type="Gene3D" id="3.80.10.10">
    <property type="entry name" value="Ribonuclease Inhibitor"/>
    <property type="match status" value="3"/>
</dbReference>
<dbReference type="InterPro" id="IPR050994">
    <property type="entry name" value="At_inactive_RLKs"/>
</dbReference>
<dbReference type="InterPro" id="IPR001611">
    <property type="entry name" value="Leu-rich_rpt"/>
</dbReference>
<dbReference type="InterPro" id="IPR003591">
    <property type="entry name" value="Leu-rich_rpt_typical-subtyp"/>
</dbReference>
<dbReference type="InterPro" id="IPR032675">
    <property type="entry name" value="LRR_dom_sf"/>
</dbReference>
<dbReference type="PANTHER" id="PTHR48010">
    <property type="entry name" value="OS05G0588300 PROTEIN"/>
    <property type="match status" value="1"/>
</dbReference>
<dbReference type="PANTHER" id="PTHR48010:SF58">
    <property type="entry name" value="RECEPTOR PROTEIN KINASE-LIKE PROTEIN ZAR1"/>
    <property type="match status" value="1"/>
</dbReference>
<dbReference type="Pfam" id="PF00560">
    <property type="entry name" value="LRR_1"/>
    <property type="match status" value="1"/>
</dbReference>
<dbReference type="Pfam" id="PF13855">
    <property type="entry name" value="LRR_8"/>
    <property type="match status" value="3"/>
</dbReference>
<dbReference type="PRINTS" id="PR00019">
    <property type="entry name" value="LEURICHRPT"/>
</dbReference>
<dbReference type="SMART" id="SM00369">
    <property type="entry name" value="LRR_TYP"/>
    <property type="match status" value="5"/>
</dbReference>
<dbReference type="SUPFAM" id="SSF52058">
    <property type="entry name" value="L domain-like"/>
    <property type="match status" value="1"/>
</dbReference>
<keyword id="KW-0002">3D-structure</keyword>
<keyword id="KW-1003">Cell membrane</keyword>
<keyword id="KW-0325">Glycoprotein</keyword>
<keyword id="KW-0391">Immunity</keyword>
<keyword id="KW-0399">Innate immunity</keyword>
<keyword id="KW-0433">Leucine-rich repeat</keyword>
<keyword id="KW-0472">Membrane</keyword>
<keyword id="KW-0611">Plant defense</keyword>
<keyword id="KW-1185">Reference proteome</keyword>
<keyword id="KW-0677">Repeat</keyword>
<keyword id="KW-0732">Signal</keyword>
<keyword id="KW-0812">Transmembrane</keyword>
<keyword id="KW-1133">Transmembrane helix</keyword>
<sequence length="496" mass="54505">MARYEFFRQIFIVLSIVSPLVRSFTVITSDSTAPSALIDGPQTGFTMTNDGARTEPDEQDAVYDIMRATGNDWAAAIPDVCRGRWHGIECMPDQDNVYHVVSLSFGALSDDTAFPTCDPQRSYVSESLTRLKHLKALFFYRCLGRAPQRIPAFLGRLGSSLQTLVLRENGFLGPIPDELGNLTNLKVLDLHKNHLNGSIPLSFNRFSGLRSLDLSGNRLTGSIPGFVLPALSVLDLNQNLLTGPVPPTLTSCGSLIKIDLSRNRVTGPIPESINRLNQLVLLDLSYNRLSGPFPSSLQGLNSLQALMLKGNTKFSTTIPENAFKGLKNLMILVLSNTNIQGSIPKSLTRLNSLRVLHLEGNNLTGEIPLEFRDVKHLSELRLNDNSLTGPVPFERDTVWRMRRKLRLYNNAGLCVNRDSDLDDAFGSKSGSTVRLCDAETSRPAPSGTVQHLSREEDGALPDGATDVSSTSKSLGFSYLSAFFLVFPNFIFMLISS</sequence>
<protein>
    <recommendedName>
        <fullName evidence="18">Protein TOO MANY MOUTHS</fullName>
    </recommendedName>
    <alternativeName>
        <fullName evidence="20">Receptor-like protein 17</fullName>
        <shortName evidence="20">AtRLP17</shortName>
    </alternativeName>
</protein>